<name>MLC1_MOUSE</name>
<organism>
    <name type="scientific">Mus musculus</name>
    <name type="common">Mouse</name>
    <dbReference type="NCBI Taxonomy" id="10090"/>
    <lineage>
        <taxon>Eukaryota</taxon>
        <taxon>Metazoa</taxon>
        <taxon>Chordata</taxon>
        <taxon>Craniata</taxon>
        <taxon>Vertebrata</taxon>
        <taxon>Euteleostomi</taxon>
        <taxon>Mammalia</taxon>
        <taxon>Eutheria</taxon>
        <taxon>Euarchontoglires</taxon>
        <taxon>Glires</taxon>
        <taxon>Rodentia</taxon>
        <taxon>Myomorpha</taxon>
        <taxon>Muroidea</taxon>
        <taxon>Muridae</taxon>
        <taxon>Murinae</taxon>
        <taxon>Mus</taxon>
        <taxon>Mus</taxon>
    </lineage>
</organism>
<protein>
    <recommendedName>
        <fullName>Membrane protein MLC1</fullName>
    </recommendedName>
</protein>
<gene>
    <name evidence="5" type="primary">Mlc1</name>
</gene>
<evidence type="ECO:0000250" key="1">
    <source>
        <dbReference type="UniProtKB" id="Q15049"/>
    </source>
</evidence>
<evidence type="ECO:0000255" key="2"/>
<evidence type="ECO:0000256" key="3">
    <source>
        <dbReference type="SAM" id="MobiDB-lite"/>
    </source>
</evidence>
<evidence type="ECO:0000305" key="4"/>
<evidence type="ECO:0000312" key="5">
    <source>
        <dbReference type="MGI" id="MGI:2157910"/>
    </source>
</evidence>
<evidence type="ECO:0007744" key="6">
    <source>
    </source>
</evidence>
<dbReference type="EMBL" id="AF449425">
    <property type="protein sequence ID" value="AAL66020.1"/>
    <property type="molecule type" value="mRNA"/>
</dbReference>
<dbReference type="EMBL" id="AK030396">
    <property type="protein sequence ID" value="BAC26941.1"/>
    <property type="molecule type" value="mRNA"/>
</dbReference>
<dbReference type="EMBL" id="BC024719">
    <property type="protein sequence ID" value="AAH24719.1"/>
    <property type="molecule type" value="mRNA"/>
</dbReference>
<dbReference type="CCDS" id="CCDS37173.1"/>
<dbReference type="RefSeq" id="NP_573504.1">
    <property type="nucleotide sequence ID" value="NM_133241.2"/>
</dbReference>
<dbReference type="BioGRID" id="228441">
    <property type="interactions" value="3"/>
</dbReference>
<dbReference type="FunCoup" id="Q8VHK5">
    <property type="interactions" value="164"/>
</dbReference>
<dbReference type="IntAct" id="Q8VHK5">
    <property type="interactions" value="1"/>
</dbReference>
<dbReference type="MINT" id="Q8VHK5"/>
<dbReference type="STRING" id="10090.ENSMUSP00000047667"/>
<dbReference type="iPTMnet" id="Q8VHK5"/>
<dbReference type="PhosphoSitePlus" id="Q8VHK5"/>
<dbReference type="SwissPalm" id="Q8VHK5"/>
<dbReference type="PaxDb" id="10090-ENSMUSP00000047667"/>
<dbReference type="ProteomicsDB" id="295680"/>
<dbReference type="Antibodypedia" id="297">
    <property type="antibodies" value="163 antibodies from 27 providers"/>
</dbReference>
<dbReference type="DNASU" id="170790"/>
<dbReference type="Ensembl" id="ENSMUST00000042594.13">
    <property type="protein sequence ID" value="ENSMUSP00000047667.7"/>
    <property type="gene ID" value="ENSMUSG00000035805.14"/>
</dbReference>
<dbReference type="GeneID" id="170790"/>
<dbReference type="KEGG" id="mmu:170790"/>
<dbReference type="UCSC" id="uc007xev.1">
    <property type="organism name" value="mouse"/>
</dbReference>
<dbReference type="AGR" id="MGI:2157910"/>
<dbReference type="CTD" id="23209"/>
<dbReference type="MGI" id="MGI:2157910">
    <property type="gene designation" value="Mlc1"/>
</dbReference>
<dbReference type="VEuPathDB" id="HostDB:ENSMUSG00000035805"/>
<dbReference type="eggNOG" id="ENOG502QUF1">
    <property type="taxonomic scope" value="Eukaryota"/>
</dbReference>
<dbReference type="GeneTree" id="ENSGT00390000015442"/>
<dbReference type="HOGENOM" id="CLU_062641_0_0_1"/>
<dbReference type="InParanoid" id="Q8VHK5"/>
<dbReference type="PhylomeDB" id="Q8VHK5"/>
<dbReference type="TreeFam" id="TF333109"/>
<dbReference type="BioGRID-ORCS" id="170790">
    <property type="hits" value="0 hits in 76 CRISPR screens"/>
</dbReference>
<dbReference type="CD-CODE" id="CE726F99">
    <property type="entry name" value="Postsynaptic density"/>
</dbReference>
<dbReference type="PRO" id="PR:Q8VHK5"/>
<dbReference type="Proteomes" id="UP000000589">
    <property type="component" value="Chromosome 15"/>
</dbReference>
<dbReference type="RNAct" id="Q8VHK5">
    <property type="molecule type" value="protein"/>
</dbReference>
<dbReference type="Bgee" id="ENSMUSG00000035805">
    <property type="expression patterns" value="Expressed in cranial nerve II and 86 other cell types or tissues"/>
</dbReference>
<dbReference type="ExpressionAtlas" id="Q8VHK5">
    <property type="expression patterns" value="baseline and differential"/>
</dbReference>
<dbReference type="GO" id="GO:0016324">
    <property type="term" value="C:apical plasma membrane"/>
    <property type="evidence" value="ECO:0000314"/>
    <property type="project" value="UniProtKB"/>
</dbReference>
<dbReference type="GO" id="GO:0097450">
    <property type="term" value="C:astrocyte end-foot"/>
    <property type="evidence" value="ECO:0000314"/>
    <property type="project" value="UniProtKB"/>
</dbReference>
<dbReference type="GO" id="GO:0016323">
    <property type="term" value="C:basolateral plasma membrane"/>
    <property type="evidence" value="ECO:0007669"/>
    <property type="project" value="Ensembl"/>
</dbReference>
<dbReference type="GO" id="GO:0005901">
    <property type="term" value="C:caveola"/>
    <property type="evidence" value="ECO:0007669"/>
    <property type="project" value="Ensembl"/>
</dbReference>
<dbReference type="GO" id="GO:0005911">
    <property type="term" value="C:cell-cell junction"/>
    <property type="evidence" value="ECO:0000314"/>
    <property type="project" value="UniProtKB"/>
</dbReference>
<dbReference type="GO" id="GO:0005829">
    <property type="term" value="C:cytosol"/>
    <property type="evidence" value="ECO:0007669"/>
    <property type="project" value="Ensembl"/>
</dbReference>
<dbReference type="GO" id="GO:0005769">
    <property type="term" value="C:early endosome"/>
    <property type="evidence" value="ECO:0007669"/>
    <property type="project" value="Ensembl"/>
</dbReference>
<dbReference type="GO" id="GO:0005783">
    <property type="term" value="C:endoplasmic reticulum"/>
    <property type="evidence" value="ECO:0000314"/>
    <property type="project" value="UniProtKB"/>
</dbReference>
<dbReference type="GO" id="GO:0005764">
    <property type="term" value="C:lysosome"/>
    <property type="evidence" value="ECO:0007669"/>
    <property type="project" value="Ensembl"/>
</dbReference>
<dbReference type="GO" id="GO:0048471">
    <property type="term" value="C:perinuclear region of cytoplasm"/>
    <property type="evidence" value="ECO:0007669"/>
    <property type="project" value="UniProtKB-SubCell"/>
</dbReference>
<dbReference type="GO" id="GO:0005886">
    <property type="term" value="C:plasma membrane"/>
    <property type="evidence" value="ECO:0000314"/>
    <property type="project" value="UniProtKB"/>
</dbReference>
<dbReference type="GO" id="GO:0055037">
    <property type="term" value="C:recycling endosome"/>
    <property type="evidence" value="ECO:0007669"/>
    <property type="project" value="Ensembl"/>
</dbReference>
<dbReference type="GO" id="GO:0042802">
    <property type="term" value="F:identical protein binding"/>
    <property type="evidence" value="ECO:0007669"/>
    <property type="project" value="Ensembl"/>
</dbReference>
<dbReference type="GO" id="GO:0044877">
    <property type="term" value="F:protein-containing complex binding"/>
    <property type="evidence" value="ECO:0007669"/>
    <property type="project" value="Ensembl"/>
</dbReference>
<dbReference type="GO" id="GO:0072584">
    <property type="term" value="P:caveolin-mediated endocytosis"/>
    <property type="evidence" value="ECO:0007669"/>
    <property type="project" value="Ensembl"/>
</dbReference>
<dbReference type="GO" id="GO:0071397">
    <property type="term" value="P:cellular response to cholesterol"/>
    <property type="evidence" value="ECO:0007669"/>
    <property type="project" value="Ensembl"/>
</dbReference>
<dbReference type="GO" id="GO:0032388">
    <property type="term" value="P:positive regulation of intracellular transport"/>
    <property type="evidence" value="ECO:0007669"/>
    <property type="project" value="Ensembl"/>
</dbReference>
<dbReference type="GO" id="GO:0015031">
    <property type="term" value="P:protein transport"/>
    <property type="evidence" value="ECO:0007669"/>
    <property type="project" value="Ensembl"/>
</dbReference>
<dbReference type="GO" id="GO:0047484">
    <property type="term" value="P:regulation of response to osmotic stress"/>
    <property type="evidence" value="ECO:0007669"/>
    <property type="project" value="Ensembl"/>
</dbReference>
<dbReference type="InterPro" id="IPR033280">
    <property type="entry name" value="Membrane_MLC1"/>
</dbReference>
<dbReference type="PANTHER" id="PTHR17597">
    <property type="entry name" value="MEMBRANE PROTEIN MLC1"/>
    <property type="match status" value="1"/>
</dbReference>
<dbReference type="PANTHER" id="PTHR17597:SF0">
    <property type="entry name" value="MEMBRANE PROTEIN MLC1"/>
    <property type="match status" value="1"/>
</dbReference>
<proteinExistence type="evidence at protein level"/>
<accession>Q8VHK5</accession>
<reference key="1">
    <citation type="submission" date="2001-11" db="EMBL/GenBank/DDBJ databases">
        <title>The genomic organization of the murine Kiaa0027 (Wkl1, Mlc1) gene.</title>
        <authorList>
            <person name="Steinke V."/>
            <person name="Meyer J."/>
            <person name="Syagailo Y.V."/>
            <person name="Ortega G."/>
            <person name="Moessner R."/>
            <person name="Schmitt A."/>
            <person name="Lesch K.P."/>
        </authorList>
    </citation>
    <scope>NUCLEOTIDE SEQUENCE [MRNA]</scope>
    <source>
        <strain>BALB/cJ</strain>
    </source>
</reference>
<reference key="2">
    <citation type="journal article" date="2005" name="Science">
        <title>The transcriptional landscape of the mammalian genome.</title>
        <authorList>
            <person name="Carninci P."/>
            <person name="Kasukawa T."/>
            <person name="Katayama S."/>
            <person name="Gough J."/>
            <person name="Frith M.C."/>
            <person name="Maeda N."/>
            <person name="Oyama R."/>
            <person name="Ravasi T."/>
            <person name="Lenhard B."/>
            <person name="Wells C."/>
            <person name="Kodzius R."/>
            <person name="Shimokawa K."/>
            <person name="Bajic V.B."/>
            <person name="Brenner S.E."/>
            <person name="Batalov S."/>
            <person name="Forrest A.R."/>
            <person name="Zavolan M."/>
            <person name="Davis M.J."/>
            <person name="Wilming L.G."/>
            <person name="Aidinis V."/>
            <person name="Allen J.E."/>
            <person name="Ambesi-Impiombato A."/>
            <person name="Apweiler R."/>
            <person name="Aturaliya R.N."/>
            <person name="Bailey T.L."/>
            <person name="Bansal M."/>
            <person name="Baxter L."/>
            <person name="Beisel K.W."/>
            <person name="Bersano T."/>
            <person name="Bono H."/>
            <person name="Chalk A.M."/>
            <person name="Chiu K.P."/>
            <person name="Choudhary V."/>
            <person name="Christoffels A."/>
            <person name="Clutterbuck D.R."/>
            <person name="Crowe M.L."/>
            <person name="Dalla E."/>
            <person name="Dalrymple B.P."/>
            <person name="de Bono B."/>
            <person name="Della Gatta G."/>
            <person name="di Bernardo D."/>
            <person name="Down T."/>
            <person name="Engstrom P."/>
            <person name="Fagiolini M."/>
            <person name="Faulkner G."/>
            <person name="Fletcher C.F."/>
            <person name="Fukushima T."/>
            <person name="Furuno M."/>
            <person name="Futaki S."/>
            <person name="Gariboldi M."/>
            <person name="Georgii-Hemming P."/>
            <person name="Gingeras T.R."/>
            <person name="Gojobori T."/>
            <person name="Green R.E."/>
            <person name="Gustincich S."/>
            <person name="Harbers M."/>
            <person name="Hayashi Y."/>
            <person name="Hensch T.K."/>
            <person name="Hirokawa N."/>
            <person name="Hill D."/>
            <person name="Huminiecki L."/>
            <person name="Iacono M."/>
            <person name="Ikeo K."/>
            <person name="Iwama A."/>
            <person name="Ishikawa T."/>
            <person name="Jakt M."/>
            <person name="Kanapin A."/>
            <person name="Katoh M."/>
            <person name="Kawasawa Y."/>
            <person name="Kelso J."/>
            <person name="Kitamura H."/>
            <person name="Kitano H."/>
            <person name="Kollias G."/>
            <person name="Krishnan S.P."/>
            <person name="Kruger A."/>
            <person name="Kummerfeld S.K."/>
            <person name="Kurochkin I.V."/>
            <person name="Lareau L.F."/>
            <person name="Lazarevic D."/>
            <person name="Lipovich L."/>
            <person name="Liu J."/>
            <person name="Liuni S."/>
            <person name="McWilliam S."/>
            <person name="Madan Babu M."/>
            <person name="Madera M."/>
            <person name="Marchionni L."/>
            <person name="Matsuda H."/>
            <person name="Matsuzawa S."/>
            <person name="Miki H."/>
            <person name="Mignone F."/>
            <person name="Miyake S."/>
            <person name="Morris K."/>
            <person name="Mottagui-Tabar S."/>
            <person name="Mulder N."/>
            <person name="Nakano N."/>
            <person name="Nakauchi H."/>
            <person name="Ng P."/>
            <person name="Nilsson R."/>
            <person name="Nishiguchi S."/>
            <person name="Nishikawa S."/>
            <person name="Nori F."/>
            <person name="Ohara O."/>
            <person name="Okazaki Y."/>
            <person name="Orlando V."/>
            <person name="Pang K.C."/>
            <person name="Pavan W.J."/>
            <person name="Pavesi G."/>
            <person name="Pesole G."/>
            <person name="Petrovsky N."/>
            <person name="Piazza S."/>
            <person name="Reed J."/>
            <person name="Reid J.F."/>
            <person name="Ring B.Z."/>
            <person name="Ringwald M."/>
            <person name="Rost B."/>
            <person name="Ruan Y."/>
            <person name="Salzberg S.L."/>
            <person name="Sandelin A."/>
            <person name="Schneider C."/>
            <person name="Schoenbach C."/>
            <person name="Sekiguchi K."/>
            <person name="Semple C.A."/>
            <person name="Seno S."/>
            <person name="Sessa L."/>
            <person name="Sheng Y."/>
            <person name="Shibata Y."/>
            <person name="Shimada H."/>
            <person name="Shimada K."/>
            <person name="Silva D."/>
            <person name="Sinclair B."/>
            <person name="Sperling S."/>
            <person name="Stupka E."/>
            <person name="Sugiura K."/>
            <person name="Sultana R."/>
            <person name="Takenaka Y."/>
            <person name="Taki K."/>
            <person name="Tammoja K."/>
            <person name="Tan S.L."/>
            <person name="Tang S."/>
            <person name="Taylor M.S."/>
            <person name="Tegner J."/>
            <person name="Teichmann S.A."/>
            <person name="Ueda H.R."/>
            <person name="van Nimwegen E."/>
            <person name="Verardo R."/>
            <person name="Wei C.L."/>
            <person name="Yagi K."/>
            <person name="Yamanishi H."/>
            <person name="Zabarovsky E."/>
            <person name="Zhu S."/>
            <person name="Zimmer A."/>
            <person name="Hide W."/>
            <person name="Bult C."/>
            <person name="Grimmond S.M."/>
            <person name="Teasdale R.D."/>
            <person name="Liu E.T."/>
            <person name="Brusic V."/>
            <person name="Quackenbush J."/>
            <person name="Wahlestedt C."/>
            <person name="Mattick J.S."/>
            <person name="Hume D.A."/>
            <person name="Kai C."/>
            <person name="Sasaki D."/>
            <person name="Tomaru Y."/>
            <person name="Fukuda S."/>
            <person name="Kanamori-Katayama M."/>
            <person name="Suzuki M."/>
            <person name="Aoki J."/>
            <person name="Arakawa T."/>
            <person name="Iida J."/>
            <person name="Imamura K."/>
            <person name="Itoh M."/>
            <person name="Kato T."/>
            <person name="Kawaji H."/>
            <person name="Kawagashira N."/>
            <person name="Kawashima T."/>
            <person name="Kojima M."/>
            <person name="Kondo S."/>
            <person name="Konno H."/>
            <person name="Nakano K."/>
            <person name="Ninomiya N."/>
            <person name="Nishio T."/>
            <person name="Okada M."/>
            <person name="Plessy C."/>
            <person name="Shibata K."/>
            <person name="Shiraki T."/>
            <person name="Suzuki S."/>
            <person name="Tagami M."/>
            <person name="Waki K."/>
            <person name="Watahiki A."/>
            <person name="Okamura-Oho Y."/>
            <person name="Suzuki H."/>
            <person name="Kawai J."/>
            <person name="Hayashizaki Y."/>
        </authorList>
    </citation>
    <scope>NUCLEOTIDE SEQUENCE [LARGE SCALE MRNA]</scope>
    <source>
        <strain>C57BL/6J</strain>
        <tissue>Pituitary</tissue>
    </source>
</reference>
<reference key="3">
    <citation type="journal article" date="2004" name="Genome Res.">
        <title>The status, quality, and expansion of the NIH full-length cDNA project: the Mammalian Gene Collection (MGC).</title>
        <authorList>
            <consortium name="The MGC Project Team"/>
        </authorList>
    </citation>
    <scope>NUCLEOTIDE SEQUENCE [LARGE SCALE MRNA]</scope>
    <source>
        <tissue>Eye</tissue>
    </source>
</reference>
<reference key="4">
    <citation type="journal article" date="2010" name="Cell">
        <title>A tissue-specific atlas of mouse protein phosphorylation and expression.</title>
        <authorList>
            <person name="Huttlin E.L."/>
            <person name="Jedrychowski M.P."/>
            <person name="Elias J.E."/>
            <person name="Goswami T."/>
            <person name="Rad R."/>
            <person name="Beausoleil S.A."/>
            <person name="Villen J."/>
            <person name="Haas W."/>
            <person name="Sowa M.E."/>
            <person name="Gygi S.P."/>
        </authorList>
    </citation>
    <scope>PHOSPHORYLATION [LARGE SCALE ANALYSIS] AT SER-183; SER-185 AND SER-188</scope>
    <scope>IDENTIFICATION BY MASS SPECTROMETRY [LARGE SCALE ANALYSIS]</scope>
    <source>
        <tissue>Brain</tissue>
    </source>
</reference>
<feature type="chain" id="PRO_0000096498" description="Membrane protein MLC1">
    <location>
        <begin position="1"/>
        <end position="382"/>
    </location>
</feature>
<feature type="transmembrane region" description="Helical" evidence="2">
    <location>
        <begin position="58"/>
        <end position="78"/>
    </location>
</feature>
<feature type="transmembrane region" description="Helical" evidence="2">
    <location>
        <begin position="88"/>
        <end position="107"/>
    </location>
</feature>
<feature type="transmembrane region" description="Helical" evidence="2">
    <location>
        <begin position="117"/>
        <end position="137"/>
    </location>
</feature>
<feature type="transmembrane region" description="Helical" evidence="2">
    <location>
        <begin position="148"/>
        <end position="168"/>
    </location>
</feature>
<feature type="transmembrane region" description="Helical" evidence="2">
    <location>
        <begin position="205"/>
        <end position="225"/>
    </location>
</feature>
<feature type="transmembrane region" description="Helical" evidence="2">
    <location>
        <begin position="234"/>
        <end position="254"/>
    </location>
</feature>
<feature type="transmembrane region" description="Helical" evidence="2">
    <location>
        <begin position="263"/>
        <end position="283"/>
    </location>
</feature>
<feature type="transmembrane region" description="Helical" evidence="2">
    <location>
        <begin position="309"/>
        <end position="329"/>
    </location>
</feature>
<feature type="region of interest" description="Disordered" evidence="3">
    <location>
        <begin position="1"/>
        <end position="43"/>
    </location>
</feature>
<feature type="compositionally biased region" description="Basic and acidic residues" evidence="3">
    <location>
        <begin position="1"/>
        <end position="28"/>
    </location>
</feature>
<feature type="modified residue" description="Phosphoserine" evidence="6">
    <location>
        <position position="183"/>
    </location>
</feature>
<feature type="modified residue" description="Phosphoserine" evidence="6">
    <location>
        <position position="185"/>
    </location>
</feature>
<feature type="modified residue" description="Phosphoserine" evidence="6">
    <location>
        <position position="188"/>
    </location>
</feature>
<keyword id="KW-1003">Cell membrane</keyword>
<keyword id="KW-0963">Cytoplasm</keyword>
<keyword id="KW-0256">Endoplasmic reticulum</keyword>
<keyword id="KW-0472">Membrane</keyword>
<keyword id="KW-0597">Phosphoprotein</keyword>
<keyword id="KW-1185">Reference proteome</keyword>
<keyword id="KW-0812">Transmembrane</keyword>
<keyword id="KW-1133">Transmembrane helix</keyword>
<comment type="function">
    <text evidence="1">Transmembrane protein mainly expressed in brain astrocytes that may play a role in transport across the blood-brain and brain-cerebrospinal fluid barriers. Regulates the response of astrocytes to hypo-osmosis by promoting calcium influx. May function as regulatory protein of membrane protein complexes such as ion channels.</text>
</comment>
<comment type="subunit">
    <text evidence="1">Interacts with ATP1B1. Part of a complex containing ATP1B1, TRPV4, AQP4 and HEPACAM.</text>
</comment>
<comment type="subcellular location">
    <subcellularLocation>
        <location evidence="4">Membrane</location>
        <topology evidence="2">Multi-pass membrane protein</topology>
    </subcellularLocation>
    <subcellularLocation>
        <location evidence="1">Cell membrane</location>
        <topology evidence="2">Multi-pass membrane protein</topology>
    </subcellularLocation>
    <subcellularLocation>
        <location evidence="1">Cytoplasm</location>
        <location evidence="1">Perinuclear region</location>
    </subcellularLocation>
    <subcellularLocation>
        <location evidence="1">Endoplasmic reticulum</location>
    </subcellularLocation>
</comment>
<sequence>MTREGQFREELGYDRMPTLERGRQDAGRQDPGSYTPDSKPKDLQLSKRLPPCFSYKTWVFSVLMGSCLLVTSGFSLYLGNVFPSEMDYLRCAAGSCIPSAIVSFAVGRRNVSAIPNFQILFVSTFAVTTTCLIWFGCKLILNPSAININFNLILLLLLELLMAATVIISARSSEEPCKKKKGSISDGSNILDEVTFPARVLKSYSVVEVIAGVSAVLGGVIALNVEEAVSGPHLSVTFFWILVACFPSAIASHVTAECPSKCLVEVLIAISSLTSPLLFTASGYLSFSVMRVVEIFKDYPPAIKSYDVLLLLLLLLLLLQGGLNTGTAIQCVSFKVSARLQAASWDPQSCPQERPAGEVVRGPLKEFDKEKAWRAVVVQMAQ</sequence>